<comment type="function">
    <text evidence="2 3">Involved in the biosynthesis of the quinone methoxy group present in the mitomycin A and B, which are used as anticancer agents (PubMed:10099135, PubMed:17461583). In vitro, catalyzes the 6-O-methylation of both C9-beta- and C9-alpha-configured 6-hydroxymitomycins via the transfer of the S-methyl group of S-adenosyl-L-methionine (AdoMet) to the 6-demethylmitomycin A and B. It can also use hydroxyquinone as substrate (PubMed:17461583).</text>
</comment>
<comment type="catalytic activity">
    <reaction evidence="3">
        <text>6-demethylmitomycin A + S-adenosyl-L-methionine = mitomycin A + S-adenosyl-L-homocysteine</text>
        <dbReference type="Rhea" id="RHEA:45104"/>
        <dbReference type="ChEBI" id="CHEBI:57856"/>
        <dbReference type="ChEBI" id="CHEBI:59789"/>
        <dbReference type="ChEBI" id="CHEBI:84589"/>
        <dbReference type="ChEBI" id="CHEBI:84955"/>
        <dbReference type="EC" id="2.1.1.316"/>
    </reaction>
</comment>
<comment type="catalytic activity">
    <reaction evidence="3">
        <text>6-demethylmitomycin B + S-adenosyl-L-methionine = mitomycin B + S-adenosyl-L-homocysteine</text>
        <dbReference type="Rhea" id="RHEA:45100"/>
        <dbReference type="ChEBI" id="CHEBI:57856"/>
        <dbReference type="ChEBI" id="CHEBI:59789"/>
        <dbReference type="ChEBI" id="CHEBI:84590"/>
        <dbReference type="ChEBI" id="CHEBI:84952"/>
        <dbReference type="EC" id="2.1.1.316"/>
    </reaction>
</comment>
<comment type="activity regulation">
    <text evidence="3">Completely inhibited by Zn(2+) and Cu(2+).</text>
</comment>
<comment type="biophysicochemical properties">
    <kinetics>
        <KM evidence="3">3.8 uM for S-adenosyl-L-methionine</KM>
        <KM evidence="3">170 uM for 6-demethylmitomycin A</KM>
        <text evidence="3">kcat is 0.110 min(-1) for methyltransferase activity with S-adenosyl-L-methionine as substrate. kcat is 0.103 min(-1) for methyltransferase activity with 6-demethylmitomycin A as substrate.</text>
    </kinetics>
</comment>
<comment type="subunit">
    <text evidence="4">Homodimer.</text>
</comment>
<comment type="disruption phenotype">
    <text evidence="3">Cells lacking this gene are unable to produce mitomycins A and B, and accumulate 6-demethylmitomycin A and 6-demethylmitomycin B.</text>
</comment>
<comment type="similarity">
    <text evidence="1">Belongs to the class I-like SAM-binding methyltransferase superfamily. Cation-independent O-methyltransferase family. COMT subfamily.</text>
</comment>
<feature type="chain" id="PRO_0000435507" description="Mitomycin biosynthesis 6-O-methyltransferase">
    <location>
        <begin position="1"/>
        <end position="349"/>
    </location>
</feature>
<feature type="active site" description="Proton acceptor" evidence="8">
    <location>
        <position position="259"/>
    </location>
</feature>
<feature type="binding site" evidence="4">
    <location>
        <position position="167"/>
    </location>
    <ligand>
        <name>S-adenosyl-L-methionine</name>
        <dbReference type="ChEBI" id="CHEBI:59789"/>
    </ligand>
</feature>
<feature type="binding site" evidence="4">
    <location>
        <position position="190"/>
    </location>
    <ligand>
        <name>S-adenosyl-L-methionine</name>
        <dbReference type="ChEBI" id="CHEBI:59789"/>
    </ligand>
</feature>
<feature type="binding site" evidence="4">
    <location>
        <begin position="213"/>
        <end position="214"/>
    </location>
    <ligand>
        <name>S-adenosyl-L-methionine</name>
        <dbReference type="ChEBI" id="CHEBI:59789"/>
    </ligand>
</feature>
<feature type="binding site" evidence="4">
    <location>
        <begin position="240"/>
        <end position="241"/>
    </location>
    <ligand>
        <name>S-adenosyl-L-methionine</name>
        <dbReference type="ChEBI" id="CHEBI:59789"/>
    </ligand>
</feature>
<feature type="binding site" evidence="4">
    <location>
        <position position="255"/>
    </location>
    <ligand>
        <name>S-adenosyl-L-methionine</name>
        <dbReference type="ChEBI" id="CHEBI:59789"/>
    </ligand>
</feature>
<feature type="binding site" evidence="4">
    <location>
        <position position="288"/>
    </location>
    <ligand>
        <name>substrate</name>
    </ligand>
</feature>
<feature type="helix" evidence="9">
    <location>
        <begin position="12"/>
        <end position="41"/>
    </location>
</feature>
<feature type="helix" evidence="9">
    <location>
        <begin position="44"/>
        <end position="47"/>
    </location>
</feature>
<feature type="helix" evidence="9">
    <location>
        <begin position="54"/>
        <end position="61"/>
    </location>
</feature>
<feature type="helix" evidence="9">
    <location>
        <begin position="65"/>
        <end position="77"/>
    </location>
</feature>
<feature type="strand" evidence="9">
    <location>
        <begin position="80"/>
        <end position="83"/>
    </location>
</feature>
<feature type="strand" evidence="9">
    <location>
        <begin position="89"/>
        <end position="91"/>
    </location>
</feature>
<feature type="helix" evidence="9">
    <location>
        <begin position="94"/>
        <end position="97"/>
    </location>
</feature>
<feature type="helix" evidence="9">
    <location>
        <begin position="106"/>
        <end position="115"/>
    </location>
</feature>
<feature type="helix" evidence="9">
    <location>
        <begin position="117"/>
        <end position="124"/>
    </location>
</feature>
<feature type="helix" evidence="9">
    <location>
        <begin position="126"/>
        <end position="132"/>
    </location>
</feature>
<feature type="helix" evidence="9">
    <location>
        <begin position="137"/>
        <end position="141"/>
    </location>
</feature>
<feature type="helix" evidence="9">
    <location>
        <begin position="145"/>
        <end position="151"/>
    </location>
</feature>
<feature type="helix" evidence="9">
    <location>
        <begin position="153"/>
        <end position="177"/>
    </location>
</feature>
<feature type="strand" evidence="9">
    <location>
        <begin position="184"/>
        <end position="189"/>
    </location>
</feature>
<feature type="helix" evidence="9">
    <location>
        <begin position="195"/>
        <end position="203"/>
    </location>
</feature>
<feature type="strand" evidence="9">
    <location>
        <begin position="208"/>
        <end position="213"/>
    </location>
</feature>
<feature type="helix" evidence="9">
    <location>
        <begin position="215"/>
        <end position="227"/>
    </location>
</feature>
<feature type="turn" evidence="9">
    <location>
        <begin position="231"/>
        <end position="233"/>
    </location>
</feature>
<feature type="strand" evidence="9">
    <location>
        <begin position="234"/>
        <end position="238"/>
    </location>
</feature>
<feature type="turn" evidence="9">
    <location>
        <begin position="241"/>
        <end position="243"/>
    </location>
</feature>
<feature type="strand" evidence="9">
    <location>
        <begin position="250"/>
        <end position="256"/>
    </location>
</feature>
<feature type="helix" evidence="9">
    <location>
        <begin position="258"/>
        <end position="260"/>
    </location>
</feature>
<feature type="helix" evidence="9">
    <location>
        <begin position="263"/>
        <end position="274"/>
    </location>
</feature>
<feature type="strand" evidence="9">
    <location>
        <begin position="282"/>
        <end position="289"/>
    </location>
</feature>
<feature type="helix" evidence="9">
    <location>
        <begin position="296"/>
        <end position="309"/>
    </location>
</feature>
<feature type="helix" evidence="9">
    <location>
        <begin position="316"/>
        <end position="324"/>
    </location>
</feature>
<feature type="turn" evidence="9">
    <location>
        <begin position="325"/>
        <end position="327"/>
    </location>
</feature>
<feature type="strand" evidence="9">
    <location>
        <begin position="328"/>
        <end position="335"/>
    </location>
</feature>
<feature type="strand" evidence="9">
    <location>
        <begin position="337"/>
        <end position="348"/>
    </location>
</feature>
<name>MMCR_STRLA</name>
<dbReference type="EC" id="2.1.1.316" evidence="3"/>
<dbReference type="EMBL" id="AF127374">
    <property type="protein sequence ID" value="AAD32742.2"/>
    <property type="molecule type" value="Genomic_DNA"/>
</dbReference>
<dbReference type="PDB" id="3GWZ">
    <property type="method" value="X-ray"/>
    <property type="resolution" value="1.91 A"/>
    <property type="chains" value="A/B/C/D=2-349"/>
</dbReference>
<dbReference type="PDB" id="3GXO">
    <property type="method" value="X-ray"/>
    <property type="resolution" value="2.30 A"/>
    <property type="chains" value="A/B/C/D=2-349"/>
</dbReference>
<dbReference type="PDBsum" id="3GWZ"/>
<dbReference type="PDBsum" id="3GXO"/>
<dbReference type="SMR" id="Q9X5T6"/>
<dbReference type="KEGG" id="ag:AAD32742"/>
<dbReference type="BioCyc" id="MetaCyc:MONOMER-20764"/>
<dbReference type="BRENDA" id="2.1.1.316">
    <property type="organism ID" value="133"/>
</dbReference>
<dbReference type="EvolutionaryTrace" id="Q9X5T6"/>
<dbReference type="GO" id="GO:0008168">
    <property type="term" value="F:methyltransferase activity"/>
    <property type="evidence" value="ECO:0000314"/>
    <property type="project" value="UniProtKB"/>
</dbReference>
<dbReference type="GO" id="GO:0008171">
    <property type="term" value="F:O-methyltransferase activity"/>
    <property type="evidence" value="ECO:0000314"/>
    <property type="project" value="CACAO"/>
</dbReference>
<dbReference type="GO" id="GO:0046983">
    <property type="term" value="F:protein dimerization activity"/>
    <property type="evidence" value="ECO:0007669"/>
    <property type="project" value="InterPro"/>
</dbReference>
<dbReference type="GO" id="GO:0032259">
    <property type="term" value="P:methylation"/>
    <property type="evidence" value="ECO:0007669"/>
    <property type="project" value="UniProtKB-KW"/>
</dbReference>
<dbReference type="GO" id="GO:1901663">
    <property type="term" value="P:quinone biosynthetic process"/>
    <property type="evidence" value="ECO:0000314"/>
    <property type="project" value="UniProtKB"/>
</dbReference>
<dbReference type="CDD" id="cd02440">
    <property type="entry name" value="AdoMet_MTases"/>
    <property type="match status" value="1"/>
</dbReference>
<dbReference type="Gene3D" id="3.40.50.150">
    <property type="entry name" value="Vaccinia Virus protein VP39"/>
    <property type="match status" value="1"/>
</dbReference>
<dbReference type="Gene3D" id="1.10.10.10">
    <property type="entry name" value="Winged helix-like DNA-binding domain superfamily/Winged helix DNA-binding domain"/>
    <property type="match status" value="1"/>
</dbReference>
<dbReference type="InterPro" id="IPR016461">
    <property type="entry name" value="COMT-like"/>
</dbReference>
<dbReference type="InterPro" id="IPR001077">
    <property type="entry name" value="O_MeTrfase_dom"/>
</dbReference>
<dbReference type="InterPro" id="IPR012967">
    <property type="entry name" value="Plant_O-MeTrfase_dimerisation"/>
</dbReference>
<dbReference type="InterPro" id="IPR029063">
    <property type="entry name" value="SAM-dependent_MTases_sf"/>
</dbReference>
<dbReference type="InterPro" id="IPR036388">
    <property type="entry name" value="WH-like_DNA-bd_sf"/>
</dbReference>
<dbReference type="InterPro" id="IPR036390">
    <property type="entry name" value="WH_DNA-bd_sf"/>
</dbReference>
<dbReference type="PANTHER" id="PTHR43712:SF2">
    <property type="entry name" value="O-METHYLTRANSFERASE CICE"/>
    <property type="match status" value="1"/>
</dbReference>
<dbReference type="PANTHER" id="PTHR43712">
    <property type="entry name" value="PUTATIVE (AFU_ORTHOLOGUE AFUA_4G14580)-RELATED"/>
    <property type="match status" value="1"/>
</dbReference>
<dbReference type="Pfam" id="PF08100">
    <property type="entry name" value="Dimerisation"/>
    <property type="match status" value="1"/>
</dbReference>
<dbReference type="Pfam" id="PF00891">
    <property type="entry name" value="Methyltransf_2"/>
    <property type="match status" value="1"/>
</dbReference>
<dbReference type="PIRSF" id="PIRSF005739">
    <property type="entry name" value="O-mtase"/>
    <property type="match status" value="1"/>
</dbReference>
<dbReference type="SUPFAM" id="SSF53335">
    <property type="entry name" value="S-adenosyl-L-methionine-dependent methyltransferases"/>
    <property type="match status" value="1"/>
</dbReference>
<dbReference type="SUPFAM" id="SSF46785">
    <property type="entry name" value="Winged helix' DNA-binding domain"/>
    <property type="match status" value="1"/>
</dbReference>
<dbReference type="PROSITE" id="PS51683">
    <property type="entry name" value="SAM_OMT_II"/>
    <property type="match status" value="1"/>
</dbReference>
<accession>Q9X5T6</accession>
<proteinExistence type="evidence at protein level"/>
<sequence>MTVEQTPENPGTAARAAAEETVNDILQGAWKARAIHVAVELGVPELLQEGPRTATALAEATGAHEQTLRRLLRLLATVGVFDDLGHDDLFAQNALSAVLLPDPASPVATDARFQAAPWHWRAWEQLTHSVRTGEASFDVANGTSFWQLTHEDPKARELFNRAMGSVSLTEAGQVAAAYDFSGAATAVDIGGGRGSLMAAVLDAFPGLRGTLLERPPVAEEARELLTGRGLADRCEILPGDFFETIPDGADVYLIKHVLHDWDDDDVVRILRRIATAMKPDSRLLVIDNLIDERPAASTLFVDLLLLVLVGGAERSESEFAALLEKSGLRVERSLPCGAGPVRIVEIRRA</sequence>
<reference key="1">
    <citation type="journal article" date="1999" name="Chem. Biol.">
        <title>Molecular characterization and analysis of the biosynthetic gene cluster for the antitumor antibiotic mitomycin C from Streptomyces lavendulae NRRL 2564.</title>
        <authorList>
            <person name="Mao Y.Q."/>
            <person name="Varoglu M."/>
            <person name="Sherman D.H."/>
        </authorList>
    </citation>
    <scope>NUCLEOTIDE SEQUENCE [GENOMIC DNA]</scope>
    <scope>FUNCTION</scope>
    <source>
        <strain>NRRL 2564</strain>
    </source>
</reference>
<reference key="2">
    <citation type="journal article" date="2007" name="J. Am. Chem. Soc.">
        <title>Hydroxyquinone O-methylation in mitomycin biosynthesis.</title>
        <authorList>
            <person name="Grueschow S."/>
            <person name="Chang L.C."/>
            <person name="Mao Y."/>
            <person name="Sherman D.H."/>
        </authorList>
    </citation>
    <scope>FUNCTION</scope>
    <scope>CATALYTIC ACTIVITY</scope>
    <scope>BIOPHYSICOCHEMICAL PROPERTIES</scope>
    <scope>ACTIVITY REGULATION</scope>
    <scope>DISRUPTION PHENOTYPE</scope>
    <scope>SUBSTRATE SPECIFICITY</scope>
    <source>
        <strain>NRRL 2564</strain>
    </source>
</reference>
<reference key="3">
    <citation type="journal article" date="2011" name="Proteins">
        <title>Structural characterization of the mitomycin 7-O-methyltransferase.</title>
        <authorList>
            <person name="Singh S."/>
            <person name="Chang A."/>
            <person name="Goff R.D."/>
            <person name="Bingman C.A."/>
            <person name="Gruschow S."/>
            <person name="Sherman D.H."/>
            <person name="Phillips G.N."/>
            <person name="Thorson J.S."/>
        </authorList>
    </citation>
    <scope>X-RAY CRYSTALLOGRAPHY (1.91 ANGSTROMS) OF 2-349 IN COMPLEX WITH SUBSTRATE AND S-ADENOSYL-L-HOMOCYSTEINE</scope>
    <scope>SUBUNIT</scope>
</reference>
<protein>
    <recommendedName>
        <fullName evidence="7">Mitomycin biosynthesis 6-O-methyltransferase</fullName>
        <ecNumber evidence="3">2.1.1.316</ecNumber>
    </recommendedName>
    <alternativeName>
        <fullName evidence="6">Mitomycin 7-O-methyltransferase</fullName>
    </alternativeName>
</protein>
<evidence type="ECO:0000255" key="1">
    <source>
        <dbReference type="PROSITE-ProRule" id="PRU01020"/>
    </source>
</evidence>
<evidence type="ECO:0000269" key="2">
    <source>
    </source>
</evidence>
<evidence type="ECO:0000269" key="3">
    <source>
    </source>
</evidence>
<evidence type="ECO:0000269" key="4">
    <source>
    </source>
</evidence>
<evidence type="ECO:0000303" key="5">
    <source>
    </source>
</evidence>
<evidence type="ECO:0000303" key="6">
    <source>
    </source>
</evidence>
<evidence type="ECO:0000305" key="7"/>
<evidence type="ECO:0000305" key="8">
    <source>
    </source>
</evidence>
<evidence type="ECO:0007829" key="9">
    <source>
        <dbReference type="PDB" id="3GWZ"/>
    </source>
</evidence>
<keyword id="KW-0002">3D-structure</keyword>
<keyword id="KW-0489">Methyltransferase</keyword>
<keyword id="KW-0949">S-adenosyl-L-methionine</keyword>
<keyword id="KW-0808">Transferase</keyword>
<organism>
    <name type="scientific">Streptomyces lavendulae</name>
    <dbReference type="NCBI Taxonomy" id="1914"/>
    <lineage>
        <taxon>Bacteria</taxon>
        <taxon>Bacillati</taxon>
        <taxon>Actinomycetota</taxon>
        <taxon>Actinomycetes</taxon>
        <taxon>Kitasatosporales</taxon>
        <taxon>Streptomycetaceae</taxon>
        <taxon>Streptomyces</taxon>
    </lineage>
</organism>
<gene>
    <name evidence="5" type="primary">mmcR</name>
</gene>